<proteinExistence type="inferred from homology"/>
<gene>
    <name evidence="1" type="primary">ureA</name>
    <name type="ordered locus">PSHAa1757</name>
</gene>
<dbReference type="EC" id="3.5.1.5" evidence="1"/>
<dbReference type="EMBL" id="CR954246">
    <property type="protein sequence ID" value="CAI86829.1"/>
    <property type="molecule type" value="Genomic_DNA"/>
</dbReference>
<dbReference type="SMR" id="Q3IH70"/>
<dbReference type="STRING" id="326442.PSHAa1757"/>
<dbReference type="KEGG" id="pha:PSHAa1757"/>
<dbReference type="PATRIC" id="fig|326442.8.peg.1705"/>
<dbReference type="eggNOG" id="COG0831">
    <property type="taxonomic scope" value="Bacteria"/>
</dbReference>
<dbReference type="HOGENOM" id="CLU_145825_1_0_6"/>
<dbReference type="BioCyc" id="PHAL326442:PSHA_RS08625-MONOMER"/>
<dbReference type="UniPathway" id="UPA00258">
    <property type="reaction ID" value="UER00370"/>
</dbReference>
<dbReference type="Proteomes" id="UP000006843">
    <property type="component" value="Chromosome I"/>
</dbReference>
<dbReference type="GO" id="GO:0005737">
    <property type="term" value="C:cytoplasm"/>
    <property type="evidence" value="ECO:0007669"/>
    <property type="project" value="UniProtKB-SubCell"/>
</dbReference>
<dbReference type="GO" id="GO:0016151">
    <property type="term" value="F:nickel cation binding"/>
    <property type="evidence" value="ECO:0007669"/>
    <property type="project" value="InterPro"/>
</dbReference>
<dbReference type="GO" id="GO:0009039">
    <property type="term" value="F:urease activity"/>
    <property type="evidence" value="ECO:0007669"/>
    <property type="project" value="UniProtKB-UniRule"/>
</dbReference>
<dbReference type="GO" id="GO:0043419">
    <property type="term" value="P:urea catabolic process"/>
    <property type="evidence" value="ECO:0007669"/>
    <property type="project" value="UniProtKB-UniRule"/>
</dbReference>
<dbReference type="CDD" id="cd00390">
    <property type="entry name" value="Urease_gamma"/>
    <property type="match status" value="1"/>
</dbReference>
<dbReference type="Gene3D" id="3.30.280.10">
    <property type="entry name" value="Urease, gamma-like subunit"/>
    <property type="match status" value="1"/>
</dbReference>
<dbReference type="HAMAP" id="MF_00739">
    <property type="entry name" value="Urease_gamma"/>
    <property type="match status" value="1"/>
</dbReference>
<dbReference type="InterPro" id="IPR012010">
    <property type="entry name" value="Urease_gamma"/>
</dbReference>
<dbReference type="InterPro" id="IPR002026">
    <property type="entry name" value="Urease_gamma/gamma-beta_su"/>
</dbReference>
<dbReference type="InterPro" id="IPR036463">
    <property type="entry name" value="Urease_gamma_sf"/>
</dbReference>
<dbReference type="InterPro" id="IPR050069">
    <property type="entry name" value="Urease_subunit"/>
</dbReference>
<dbReference type="NCBIfam" id="NF009712">
    <property type="entry name" value="PRK13241.1"/>
    <property type="match status" value="1"/>
</dbReference>
<dbReference type="NCBIfam" id="TIGR00193">
    <property type="entry name" value="urease_gam"/>
    <property type="match status" value="1"/>
</dbReference>
<dbReference type="PANTHER" id="PTHR33569">
    <property type="entry name" value="UREASE"/>
    <property type="match status" value="1"/>
</dbReference>
<dbReference type="PANTHER" id="PTHR33569:SF1">
    <property type="entry name" value="UREASE"/>
    <property type="match status" value="1"/>
</dbReference>
<dbReference type="Pfam" id="PF00547">
    <property type="entry name" value="Urease_gamma"/>
    <property type="match status" value="1"/>
</dbReference>
<dbReference type="PIRSF" id="PIRSF001223">
    <property type="entry name" value="Urease_gamma"/>
    <property type="match status" value="1"/>
</dbReference>
<dbReference type="SUPFAM" id="SSF54111">
    <property type="entry name" value="Urease, gamma-subunit"/>
    <property type="match status" value="1"/>
</dbReference>
<evidence type="ECO:0000255" key="1">
    <source>
        <dbReference type="HAMAP-Rule" id="MF_00739"/>
    </source>
</evidence>
<accession>Q3IH70</accession>
<keyword id="KW-0963">Cytoplasm</keyword>
<keyword id="KW-0378">Hydrolase</keyword>
<keyword id="KW-1185">Reference proteome</keyword>
<comment type="catalytic activity">
    <reaction evidence="1">
        <text>urea + 2 H2O + H(+) = hydrogencarbonate + 2 NH4(+)</text>
        <dbReference type="Rhea" id="RHEA:20557"/>
        <dbReference type="ChEBI" id="CHEBI:15377"/>
        <dbReference type="ChEBI" id="CHEBI:15378"/>
        <dbReference type="ChEBI" id="CHEBI:16199"/>
        <dbReference type="ChEBI" id="CHEBI:17544"/>
        <dbReference type="ChEBI" id="CHEBI:28938"/>
        <dbReference type="EC" id="3.5.1.5"/>
    </reaction>
</comment>
<comment type="pathway">
    <text evidence="1">Nitrogen metabolism; urea degradation; CO(2) and NH(3) from urea (urease route): step 1/1.</text>
</comment>
<comment type="subunit">
    <text evidence="1">Heterotrimer of UreA (gamma), UreB (beta) and UreC (alpha) subunits. Three heterotrimers associate to form the active enzyme.</text>
</comment>
<comment type="subcellular location">
    <subcellularLocation>
        <location evidence="1">Cytoplasm</location>
    </subcellularLocation>
</comment>
<comment type="similarity">
    <text evidence="1">Belongs to the urease gamma subunit family.</text>
</comment>
<reference key="1">
    <citation type="journal article" date="2005" name="Genome Res.">
        <title>Coping with cold: the genome of the versatile marine Antarctica bacterium Pseudoalteromonas haloplanktis TAC125.</title>
        <authorList>
            <person name="Medigue C."/>
            <person name="Krin E."/>
            <person name="Pascal G."/>
            <person name="Barbe V."/>
            <person name="Bernsel A."/>
            <person name="Bertin P.N."/>
            <person name="Cheung F."/>
            <person name="Cruveiller S."/>
            <person name="D'Amico S."/>
            <person name="Duilio A."/>
            <person name="Fang G."/>
            <person name="Feller G."/>
            <person name="Ho C."/>
            <person name="Mangenot S."/>
            <person name="Marino G."/>
            <person name="Nilsson J."/>
            <person name="Parrilli E."/>
            <person name="Rocha E.P.C."/>
            <person name="Rouy Z."/>
            <person name="Sekowska A."/>
            <person name="Tutino M.L."/>
            <person name="Vallenet D."/>
            <person name="von Heijne G."/>
            <person name="Danchin A."/>
        </authorList>
    </citation>
    <scope>NUCLEOTIDE SEQUENCE [LARGE SCALE GENOMIC DNA]</scope>
    <source>
        <strain>TAC 125</strain>
    </source>
</reference>
<protein>
    <recommendedName>
        <fullName evidence="1">Urease subunit gamma</fullName>
        <ecNumber evidence="1">3.5.1.5</ecNumber>
    </recommendedName>
    <alternativeName>
        <fullName evidence="1">Urea amidohydrolase subunit gamma</fullName>
    </alternativeName>
</protein>
<feature type="chain" id="PRO_0000234209" description="Urease subunit gamma">
    <location>
        <begin position="1"/>
        <end position="100"/>
    </location>
</feature>
<organism>
    <name type="scientific">Pseudoalteromonas translucida (strain TAC 125)</name>
    <dbReference type="NCBI Taxonomy" id="326442"/>
    <lineage>
        <taxon>Bacteria</taxon>
        <taxon>Pseudomonadati</taxon>
        <taxon>Pseudomonadota</taxon>
        <taxon>Gammaproteobacteria</taxon>
        <taxon>Alteromonadales</taxon>
        <taxon>Pseudoalteromonadaceae</taxon>
        <taxon>Pseudoalteromonas</taxon>
    </lineage>
</organism>
<sequence>MELTPRDKDKLMLFTAGLLAERRKAKGLKLNYPEAIALITCAIMEGAREGRTVAEMMALGREMLTRDDVMEGIAEMIQDVQVEATFPDGTKLVTVHNPIV</sequence>
<name>URE3_PSET1</name>